<reference key="1">
    <citation type="journal article" date="2008" name="BMC Genomics">
        <title>The missing link: Bordetella petrii is endowed with both the metabolic versatility of environmental bacteria and virulence traits of pathogenic Bordetellae.</title>
        <authorList>
            <person name="Gross R."/>
            <person name="Guzman C.A."/>
            <person name="Sebaihia M."/>
            <person name="Martin dos Santos V.A.P."/>
            <person name="Pieper D.H."/>
            <person name="Koebnik R."/>
            <person name="Lechner M."/>
            <person name="Bartels D."/>
            <person name="Buhrmester J."/>
            <person name="Choudhuri J.V."/>
            <person name="Ebensen T."/>
            <person name="Gaigalat L."/>
            <person name="Herrmann S."/>
            <person name="Khachane A.N."/>
            <person name="Larisch C."/>
            <person name="Link S."/>
            <person name="Linke B."/>
            <person name="Meyer F."/>
            <person name="Mormann S."/>
            <person name="Nakunst D."/>
            <person name="Rueckert C."/>
            <person name="Schneiker-Bekel S."/>
            <person name="Schulze K."/>
            <person name="Voerholter F.-J."/>
            <person name="Yevsa T."/>
            <person name="Engle J.T."/>
            <person name="Goldman W.E."/>
            <person name="Puehler A."/>
            <person name="Goebel U.B."/>
            <person name="Goesmann A."/>
            <person name="Bloecker H."/>
            <person name="Kaiser O."/>
            <person name="Martinez-Arias R."/>
        </authorList>
    </citation>
    <scope>NUCLEOTIDE SEQUENCE [LARGE SCALE GENOMIC DNA]</scope>
    <source>
        <strain>ATCC BAA-461 / DSM 12804 / CCUG 43448</strain>
    </source>
</reference>
<feature type="chain" id="PRO_1000200342" description="tRNA uridine(34) hydroxylase">
    <location>
        <begin position="1"/>
        <end position="252"/>
    </location>
</feature>
<feature type="domain" description="Rhodanese" evidence="1">
    <location>
        <begin position="129"/>
        <end position="223"/>
    </location>
</feature>
<feature type="active site" description="Cysteine persulfide intermediate" evidence="1">
    <location>
        <position position="183"/>
    </location>
</feature>
<sequence>MPAVVNIAAYKFVVLDNLPTLRADVLAQAGAVNLKGTVLLAEEGINLFLAGSRDKIDTFLQWLRADSRLADLEAKFSLSETVPFRRLRVKIKREIIRMDHPAIQPQSGRAPAVSPATLARWLEQGVDDQGRPVVMLDTRNAFEVDAGTFEGAVDWRIERFTQFPAAVQAHRDSLRGKTVVSFCTGGIRCEKAALYMAESGVEHVYQLDGGILKYFEETGGKGFNGNCFVFDERVALDPALAPAGAVAQLATA</sequence>
<comment type="function">
    <text evidence="1">Catalyzes oxygen-dependent 5-hydroxyuridine (ho5U) modification at position 34 in tRNAs.</text>
</comment>
<comment type="catalytic activity">
    <reaction evidence="1">
        <text>uridine(34) in tRNA + AH2 + O2 = 5-hydroxyuridine(34) in tRNA + A + H2O</text>
        <dbReference type="Rhea" id="RHEA:64224"/>
        <dbReference type="Rhea" id="RHEA-COMP:11727"/>
        <dbReference type="Rhea" id="RHEA-COMP:13381"/>
        <dbReference type="ChEBI" id="CHEBI:13193"/>
        <dbReference type="ChEBI" id="CHEBI:15377"/>
        <dbReference type="ChEBI" id="CHEBI:15379"/>
        <dbReference type="ChEBI" id="CHEBI:17499"/>
        <dbReference type="ChEBI" id="CHEBI:65315"/>
        <dbReference type="ChEBI" id="CHEBI:136877"/>
    </reaction>
</comment>
<comment type="similarity">
    <text evidence="1">Belongs to the TrhO family.</text>
</comment>
<evidence type="ECO:0000255" key="1">
    <source>
        <dbReference type="HAMAP-Rule" id="MF_00469"/>
    </source>
</evidence>
<accession>A9I7T3</accession>
<keyword id="KW-0560">Oxidoreductase</keyword>
<keyword id="KW-0819">tRNA processing</keyword>
<dbReference type="EC" id="1.14.-.-" evidence="1"/>
<dbReference type="EMBL" id="AM902716">
    <property type="protein sequence ID" value="CAP44445.1"/>
    <property type="molecule type" value="Genomic_DNA"/>
</dbReference>
<dbReference type="SMR" id="A9I7T3"/>
<dbReference type="STRING" id="94624.Bpet4097"/>
<dbReference type="KEGG" id="bpt:Bpet4097"/>
<dbReference type="eggNOG" id="COG1054">
    <property type="taxonomic scope" value="Bacteria"/>
</dbReference>
<dbReference type="Proteomes" id="UP000001225">
    <property type="component" value="Chromosome"/>
</dbReference>
<dbReference type="GO" id="GO:0016705">
    <property type="term" value="F:oxidoreductase activity, acting on paired donors, with incorporation or reduction of molecular oxygen"/>
    <property type="evidence" value="ECO:0007669"/>
    <property type="project" value="UniProtKB-UniRule"/>
</dbReference>
<dbReference type="GO" id="GO:0006400">
    <property type="term" value="P:tRNA modification"/>
    <property type="evidence" value="ECO:0007669"/>
    <property type="project" value="UniProtKB-UniRule"/>
</dbReference>
<dbReference type="CDD" id="cd01518">
    <property type="entry name" value="RHOD_YceA"/>
    <property type="match status" value="1"/>
</dbReference>
<dbReference type="Gene3D" id="3.30.70.100">
    <property type="match status" value="1"/>
</dbReference>
<dbReference type="Gene3D" id="3.40.250.10">
    <property type="entry name" value="Rhodanese-like domain"/>
    <property type="match status" value="1"/>
</dbReference>
<dbReference type="HAMAP" id="MF_00469">
    <property type="entry name" value="TrhO"/>
    <property type="match status" value="1"/>
</dbReference>
<dbReference type="InterPro" id="IPR001763">
    <property type="entry name" value="Rhodanese-like_dom"/>
</dbReference>
<dbReference type="InterPro" id="IPR036873">
    <property type="entry name" value="Rhodanese-like_dom_sf"/>
</dbReference>
<dbReference type="InterPro" id="IPR020936">
    <property type="entry name" value="TrhO"/>
</dbReference>
<dbReference type="InterPro" id="IPR040503">
    <property type="entry name" value="TRHO_N"/>
</dbReference>
<dbReference type="NCBIfam" id="NF003703">
    <property type="entry name" value="PRK05320.1"/>
    <property type="match status" value="1"/>
</dbReference>
<dbReference type="PANTHER" id="PTHR43268:SF3">
    <property type="entry name" value="RHODANESE-LIKE DOMAIN-CONTAINING PROTEIN 7-RELATED"/>
    <property type="match status" value="1"/>
</dbReference>
<dbReference type="PANTHER" id="PTHR43268">
    <property type="entry name" value="THIOSULFATE SULFURTRANSFERASE/RHODANESE-LIKE DOMAIN-CONTAINING PROTEIN 2"/>
    <property type="match status" value="1"/>
</dbReference>
<dbReference type="Pfam" id="PF00581">
    <property type="entry name" value="Rhodanese"/>
    <property type="match status" value="1"/>
</dbReference>
<dbReference type="Pfam" id="PF17773">
    <property type="entry name" value="UPF0176_N"/>
    <property type="match status" value="1"/>
</dbReference>
<dbReference type="SMART" id="SM00450">
    <property type="entry name" value="RHOD"/>
    <property type="match status" value="1"/>
</dbReference>
<dbReference type="SUPFAM" id="SSF52821">
    <property type="entry name" value="Rhodanese/Cell cycle control phosphatase"/>
    <property type="match status" value="1"/>
</dbReference>
<dbReference type="PROSITE" id="PS50206">
    <property type="entry name" value="RHODANESE_3"/>
    <property type="match status" value="1"/>
</dbReference>
<proteinExistence type="inferred from homology"/>
<gene>
    <name evidence="1" type="primary">trhO</name>
    <name type="ordered locus">Bpet4097</name>
</gene>
<name>TRHO_BORPD</name>
<organism>
    <name type="scientific">Bordetella petrii (strain ATCC BAA-461 / DSM 12804 / CCUG 43448)</name>
    <dbReference type="NCBI Taxonomy" id="340100"/>
    <lineage>
        <taxon>Bacteria</taxon>
        <taxon>Pseudomonadati</taxon>
        <taxon>Pseudomonadota</taxon>
        <taxon>Betaproteobacteria</taxon>
        <taxon>Burkholderiales</taxon>
        <taxon>Alcaligenaceae</taxon>
        <taxon>Bordetella</taxon>
    </lineage>
</organism>
<protein>
    <recommendedName>
        <fullName evidence="1">tRNA uridine(34) hydroxylase</fullName>
        <ecNumber evidence="1">1.14.-.-</ecNumber>
    </recommendedName>
    <alternativeName>
        <fullName evidence="1">tRNA hydroxylation protein O</fullName>
    </alternativeName>
</protein>